<feature type="chain" id="PRO_0000071553" description="Acetyl-hydrolase">
    <location>
        <begin position="1"/>
        <end position="299"/>
    </location>
</feature>
<feature type="short sequence motif" description="Involved in the stabilization of the negatively charged intermediate by the formation of the oxyanion hole" evidence="2">
    <location>
        <begin position="73"/>
        <end position="75"/>
    </location>
</feature>
<feature type="active site" evidence="1 3">
    <location>
        <position position="143"/>
    </location>
</feature>
<feature type="active site" evidence="1">
    <location>
        <position position="237"/>
    </location>
</feature>
<feature type="active site" evidence="1">
    <location>
        <position position="267"/>
    </location>
</feature>
<reference key="1">
    <citation type="journal article" date="1991" name="J. Bacteriol.">
        <title>Nucleotide sequence analysis reveals linked N-acetyl hydrolase, thioesterase, transport, and regulatory genes encoded by the bialaphos biosynthetic gene cluster of Streptomyces hygroscopicus.</title>
        <authorList>
            <person name="Raibaud A."/>
            <person name="Zalacain M."/>
            <person name="Holt T.G."/>
            <person name="Tizard R."/>
            <person name="Thompson C.J."/>
        </authorList>
    </citation>
    <scope>NUCLEOTIDE SEQUENCE [GENOMIC DNA]</scope>
    <source>
        <strain>ATCC 21705 / DSM 41527 / SF-1293</strain>
    </source>
</reference>
<comment type="function">
    <text>This protein removes the N-acetyl group from bialaphos as one of the final steps of biosynthesis of phosphinothricin tripeptide (PTT), also known as bialaphos (BA), a natural-product antibiotic and potent herbicide.</text>
</comment>
<comment type="pathway">
    <text>Secondary metabolite biosynthesis; bialaphos biosynthesis.</text>
</comment>
<comment type="similarity">
    <text evidence="4">Belongs to the 'GDXG' lipolytic enzyme family.</text>
</comment>
<proteinExistence type="inferred from homology"/>
<name>BAH_STRHY</name>
<sequence>MASPELELVRELIELNWHTRNGEVEPRRIAYDRAQEAFGNLGVPPGDVVTVGHCTAEWVRPARQDGRTLLYLHGGSYALGSPQSHRHLSSALGDAAGAAVLALHYRRPPESPFPAAVEDAVAAYRMLLEQGCPPGRVTLAGDSAGAGLAVAALQALRDAGTPLPAAAVCISPWADLACEGASHTTRKAREILLDTADLRRMAERYLAGTDPRHPLASPAHGDLTGLPPLLIQVGSEEVLHDDARALEQAALKAGTPVTFEEWPEMFHVWHWYHPVLPEGRRAIEVAGAFLRTATGEGLK</sequence>
<dbReference type="EC" id="3.1.1.-"/>
<dbReference type="EMBL" id="M64783">
    <property type="protein sequence ID" value="AAA79277.1"/>
    <property type="molecule type" value="Genomic_DNA"/>
</dbReference>
<dbReference type="PIR" id="A47031">
    <property type="entry name" value="A47031"/>
</dbReference>
<dbReference type="SMR" id="Q01109"/>
<dbReference type="ESTHER" id="strhy-bahli">
    <property type="family name" value="Hormone-sensitive_lipase_like"/>
</dbReference>
<dbReference type="BioCyc" id="MetaCyc:MONOMER-15055"/>
<dbReference type="UniPathway" id="UPA00197"/>
<dbReference type="GO" id="GO:0004806">
    <property type="term" value="F:triacylglycerol lipase activity"/>
    <property type="evidence" value="ECO:0007669"/>
    <property type="project" value="TreeGrafter"/>
</dbReference>
<dbReference type="GO" id="GO:0017000">
    <property type="term" value="P:antibiotic biosynthetic process"/>
    <property type="evidence" value="ECO:0007669"/>
    <property type="project" value="UniProtKB-KW"/>
</dbReference>
<dbReference type="Gene3D" id="3.40.50.1820">
    <property type="entry name" value="alpha/beta hydrolase"/>
    <property type="match status" value="1"/>
</dbReference>
<dbReference type="InterPro" id="IPR013094">
    <property type="entry name" value="AB_hydrolase_3"/>
</dbReference>
<dbReference type="InterPro" id="IPR029058">
    <property type="entry name" value="AB_hydrolase_fold"/>
</dbReference>
<dbReference type="InterPro" id="IPR050300">
    <property type="entry name" value="GDXG_lipolytic_enzyme"/>
</dbReference>
<dbReference type="InterPro" id="IPR002168">
    <property type="entry name" value="Lipase_GDXG_HIS_AS"/>
</dbReference>
<dbReference type="InterPro" id="IPR033140">
    <property type="entry name" value="Lipase_GDXG_put_SER_AS"/>
</dbReference>
<dbReference type="PANTHER" id="PTHR48081">
    <property type="entry name" value="AB HYDROLASE SUPERFAMILY PROTEIN C4A8.06C"/>
    <property type="match status" value="1"/>
</dbReference>
<dbReference type="PANTHER" id="PTHR48081:SF30">
    <property type="entry name" value="ACETYL-HYDROLASE LIPR-RELATED"/>
    <property type="match status" value="1"/>
</dbReference>
<dbReference type="Pfam" id="PF07859">
    <property type="entry name" value="Abhydrolase_3"/>
    <property type="match status" value="1"/>
</dbReference>
<dbReference type="SUPFAM" id="SSF53474">
    <property type="entry name" value="alpha/beta-Hydrolases"/>
    <property type="match status" value="1"/>
</dbReference>
<dbReference type="PROSITE" id="PS01173">
    <property type="entry name" value="LIPASE_GDXG_HIS"/>
    <property type="match status" value="1"/>
</dbReference>
<dbReference type="PROSITE" id="PS01174">
    <property type="entry name" value="LIPASE_GDXG_SER"/>
    <property type="match status" value="1"/>
</dbReference>
<evidence type="ECO:0000250" key="1">
    <source>
        <dbReference type="UniProtKB" id="O06350"/>
    </source>
</evidence>
<evidence type="ECO:0000250" key="2">
    <source>
        <dbReference type="UniProtKB" id="Q5NUF3"/>
    </source>
</evidence>
<evidence type="ECO:0000255" key="3">
    <source>
        <dbReference type="PROSITE-ProRule" id="PRU10038"/>
    </source>
</evidence>
<evidence type="ECO:0000305" key="4"/>
<protein>
    <recommendedName>
        <fullName>Acetyl-hydrolase</fullName>
        <ecNumber>3.1.1.-</ecNumber>
    </recommendedName>
</protein>
<gene>
    <name type="primary">bah</name>
</gene>
<accession>Q01109</accession>
<organism>
    <name type="scientific">Streptomyces hygroscopicus</name>
    <dbReference type="NCBI Taxonomy" id="1912"/>
    <lineage>
        <taxon>Bacteria</taxon>
        <taxon>Bacillati</taxon>
        <taxon>Actinomycetota</taxon>
        <taxon>Actinomycetes</taxon>
        <taxon>Kitasatosporales</taxon>
        <taxon>Streptomycetaceae</taxon>
        <taxon>Streptomyces</taxon>
        <taxon>Streptomyces violaceusniger group</taxon>
    </lineage>
</organism>
<keyword id="KW-0045">Antibiotic biosynthesis</keyword>
<keyword id="KW-0378">Hydrolase</keyword>